<dbReference type="EMBL" id="X70418">
    <property type="status" value="NOT_ANNOTATED_CDS"/>
    <property type="molecule type" value="Genomic_DNA"/>
</dbReference>
<dbReference type="Proteomes" id="UP000002321">
    <property type="component" value="Genome"/>
</dbReference>
<dbReference type="GO" id="GO:0052170">
    <property type="term" value="P:symbiont-mediated suppression of host innate immune response"/>
    <property type="evidence" value="ECO:0007669"/>
    <property type="project" value="UniProtKB-KW"/>
</dbReference>
<dbReference type="InterPro" id="IPR002488">
    <property type="entry name" value="Gemini_C4"/>
</dbReference>
<dbReference type="Pfam" id="PF01492">
    <property type="entry name" value="Gemini_C4"/>
    <property type="match status" value="1"/>
</dbReference>
<evidence type="ECO:0000250" key="1"/>
<evidence type="ECO:0000305" key="2"/>
<keyword id="KW-0945">Host-virus interaction</keyword>
<keyword id="KW-1090">Inhibition of host innate immune response by virus</keyword>
<keyword id="KW-1185">Reference proteome</keyword>
<keyword id="KW-0941">Suppressor of RNA silencing</keyword>
<keyword id="KW-0899">Viral immunoevasion</keyword>
<name>AC4_PHUV</name>
<accession>P0C6G4</accession>
<sequence length="60" mass="6746">MKMGNLICTCLFSSKENTNARTTDSLTSYPLPDQHISIRTFRELNQAPTSRRTSTKTAIP</sequence>
<proteinExistence type="inferred from homology"/>
<feature type="chain" id="PRO_0000323693" description="Protein AC4">
    <location>
        <begin position="1"/>
        <end position="60"/>
    </location>
</feature>
<organism>
    <name type="scientific">Pepper huasteco yellow vein virus</name>
    <name type="common">PHYVV</name>
    <name type="synonym">Pepper huasteco virus</name>
    <dbReference type="NCBI Taxonomy" id="223303"/>
    <lineage>
        <taxon>Viruses</taxon>
        <taxon>Monodnaviria</taxon>
        <taxon>Shotokuvirae</taxon>
        <taxon>Cressdnaviricota</taxon>
        <taxon>Repensiviricetes</taxon>
        <taxon>Geplafuvirales</taxon>
        <taxon>Geminiviridae</taxon>
        <taxon>Begomovirus</taxon>
    </lineage>
</organism>
<organismHost>
    <name type="scientific">Capsicum annuum</name>
    <name type="common">Capsicum pepper</name>
    <dbReference type="NCBI Taxonomy" id="4072"/>
</organismHost>
<protein>
    <recommendedName>
        <fullName>Protein AC4</fullName>
    </recommendedName>
    <alternativeName>
        <fullName>Protein AL4</fullName>
    </alternativeName>
</protein>
<reference key="1">
    <citation type="journal article" date="1993" name="J. Gen. Virol.">
        <title>Complete nucleotide sequence of pepper huasteco virus: analysis and comparison with bipartite geminiviruses.</title>
        <authorList>
            <person name="Torres-Pacheco I."/>
            <person name="Garzon-Tiznado J.A."/>
            <person name="Herrera-Estrella L."/>
            <person name="Rivera-Bustamante R.F."/>
        </authorList>
    </citation>
    <scope>NUCLEOTIDE SEQUENCE [GENOMIC DNA]</scope>
</reference>
<comment type="function">
    <text evidence="1">Pathogenicity determinant (By similarity). May act as a suppressor of RNA-mediated gene silencing, also known as post-transcriptional gene silencing (PTGS), a mechanism of plant viral defense that limits the accumulation of viral RNAs.</text>
</comment>
<comment type="similarity">
    <text evidence="2">Belongs to the geminiviridae protein AC4/C4 family.</text>
</comment>
<gene>
    <name type="ORF">AC4</name>
    <name type="ORF">AL4</name>
</gene>